<keyword id="KW-0150">Chloroplast</keyword>
<keyword id="KW-0934">Plastid</keyword>
<keyword id="KW-1185">Reference proteome</keyword>
<keyword id="KW-0808">Transferase</keyword>
<keyword id="KW-0809">Transit peptide</keyword>
<reference key="1">
    <citation type="journal article" date="2000" name="Nature">
        <title>Sequence and analysis of chromosome 1 of the plant Arabidopsis thaliana.</title>
        <authorList>
            <person name="Theologis A."/>
            <person name="Ecker J.R."/>
            <person name="Palm C.J."/>
            <person name="Federspiel N.A."/>
            <person name="Kaul S."/>
            <person name="White O."/>
            <person name="Alonso J."/>
            <person name="Altafi H."/>
            <person name="Araujo R."/>
            <person name="Bowman C.L."/>
            <person name="Brooks S.Y."/>
            <person name="Buehler E."/>
            <person name="Chan A."/>
            <person name="Chao Q."/>
            <person name="Chen H."/>
            <person name="Cheuk R.F."/>
            <person name="Chin C.W."/>
            <person name="Chung M.K."/>
            <person name="Conn L."/>
            <person name="Conway A.B."/>
            <person name="Conway A.R."/>
            <person name="Creasy T.H."/>
            <person name="Dewar K."/>
            <person name="Dunn P."/>
            <person name="Etgu P."/>
            <person name="Feldblyum T.V."/>
            <person name="Feng J.-D."/>
            <person name="Fong B."/>
            <person name="Fujii C.Y."/>
            <person name="Gill J.E."/>
            <person name="Goldsmith A.D."/>
            <person name="Haas B."/>
            <person name="Hansen N.F."/>
            <person name="Hughes B."/>
            <person name="Huizar L."/>
            <person name="Hunter J.L."/>
            <person name="Jenkins J."/>
            <person name="Johnson-Hopson C."/>
            <person name="Khan S."/>
            <person name="Khaykin E."/>
            <person name="Kim C.J."/>
            <person name="Koo H.L."/>
            <person name="Kremenetskaia I."/>
            <person name="Kurtz D.B."/>
            <person name="Kwan A."/>
            <person name="Lam B."/>
            <person name="Langin-Hooper S."/>
            <person name="Lee A."/>
            <person name="Lee J.M."/>
            <person name="Lenz C.A."/>
            <person name="Li J.H."/>
            <person name="Li Y.-P."/>
            <person name="Lin X."/>
            <person name="Liu S.X."/>
            <person name="Liu Z.A."/>
            <person name="Luros J.S."/>
            <person name="Maiti R."/>
            <person name="Marziali A."/>
            <person name="Militscher J."/>
            <person name="Miranda M."/>
            <person name="Nguyen M."/>
            <person name="Nierman W.C."/>
            <person name="Osborne B.I."/>
            <person name="Pai G."/>
            <person name="Peterson J."/>
            <person name="Pham P.K."/>
            <person name="Rizzo M."/>
            <person name="Rooney T."/>
            <person name="Rowley D."/>
            <person name="Sakano H."/>
            <person name="Salzberg S.L."/>
            <person name="Schwartz J.R."/>
            <person name="Shinn P."/>
            <person name="Southwick A.M."/>
            <person name="Sun H."/>
            <person name="Tallon L.J."/>
            <person name="Tambunga G."/>
            <person name="Toriumi M.J."/>
            <person name="Town C.D."/>
            <person name="Utterback T."/>
            <person name="Van Aken S."/>
            <person name="Vaysberg M."/>
            <person name="Vysotskaia V.S."/>
            <person name="Walker M."/>
            <person name="Wu D."/>
            <person name="Yu G."/>
            <person name="Fraser C.M."/>
            <person name="Venter J.C."/>
            <person name="Davis R.W."/>
        </authorList>
    </citation>
    <scope>NUCLEOTIDE SEQUENCE [LARGE SCALE GENOMIC DNA]</scope>
    <source>
        <strain>cv. Columbia</strain>
    </source>
</reference>
<reference key="2">
    <citation type="journal article" date="2017" name="Plant J.">
        <title>Araport11: a complete reannotation of the Arabidopsis thaliana reference genome.</title>
        <authorList>
            <person name="Cheng C.Y."/>
            <person name="Krishnakumar V."/>
            <person name="Chan A.P."/>
            <person name="Thibaud-Nissen F."/>
            <person name="Schobel S."/>
            <person name="Town C.D."/>
        </authorList>
    </citation>
    <scope>GENOME REANNOTATION</scope>
    <source>
        <strain>cv. Columbia</strain>
    </source>
</reference>
<reference key="3">
    <citation type="submission" date="2004-04" db="EMBL/GenBank/DDBJ databases">
        <title>Arabidopsis ORF clones.</title>
        <authorList>
            <person name="Kim C.J."/>
            <person name="Chen H."/>
            <person name="Cheuk R.F."/>
            <person name="Shinn P."/>
            <person name="Carninci P."/>
            <person name="Hayashizaki Y."/>
            <person name="Ishida J."/>
            <person name="Kamiya A."/>
            <person name="Kawai J."/>
            <person name="Narusaka M."/>
            <person name="Sakurai T."/>
            <person name="Satou M."/>
            <person name="Seki M."/>
            <person name="Shinozaki K."/>
            <person name="Ecker J.R."/>
        </authorList>
    </citation>
    <scope>NUCLEOTIDE SEQUENCE [LARGE SCALE MRNA] OF 10-432</scope>
    <source>
        <strain>cv. Columbia</strain>
    </source>
</reference>
<reference key="4">
    <citation type="submission" date="2004-09" db="EMBL/GenBank/DDBJ databases">
        <title>Large-scale analysis of RIKEN Arabidopsis full-length (RAFL) cDNAs.</title>
        <authorList>
            <person name="Totoki Y."/>
            <person name="Seki M."/>
            <person name="Ishida J."/>
            <person name="Nakajima M."/>
            <person name="Enju A."/>
            <person name="Kamiya A."/>
            <person name="Narusaka M."/>
            <person name="Shin-i T."/>
            <person name="Nakagawa M."/>
            <person name="Sakamoto N."/>
            <person name="Oishi K."/>
            <person name="Kohara Y."/>
            <person name="Kobayashi M."/>
            <person name="Toyoda A."/>
            <person name="Sakaki Y."/>
            <person name="Sakurai T."/>
            <person name="Iida K."/>
            <person name="Akiyama K."/>
            <person name="Satou M."/>
            <person name="Toyoda T."/>
            <person name="Konagaya A."/>
            <person name="Carninci P."/>
            <person name="Kawai J."/>
            <person name="Hayashizaki Y."/>
            <person name="Shinozaki K."/>
        </authorList>
    </citation>
    <scope>NUCLEOTIDE SEQUENCE [LARGE SCALE MRNA]</scope>
    <source>
        <strain>cv. Columbia</strain>
    </source>
</reference>
<reference key="5">
    <citation type="journal article" date="2010" name="Proc. Natl. Acad. Sci. U.S.A.">
        <title>A role for tetrahydrofolates in the metabolism of iron-sulfur clusters in all domains of life.</title>
        <authorList>
            <person name="Waller J.C."/>
            <person name="Alvarez S."/>
            <person name="Naponelli V."/>
            <person name="Lara-Nunez A."/>
            <person name="Blaby I.K."/>
            <person name="Da Silva V."/>
            <person name="Ziemak M.J."/>
            <person name="Vickers T.J."/>
            <person name="Beverley S.M."/>
            <person name="Edison A.S."/>
            <person name="Rocca J.R."/>
            <person name="Gregory J.F."/>
            <person name="de Crecy-Lagard V."/>
            <person name="Hanson A.D."/>
        </authorList>
    </citation>
    <scope>FUNCTION</scope>
</reference>
<reference key="6">
    <citation type="journal article" date="2012" name="J. Exp. Bot.">
        <title>Mitochondrial and plastidial COG0354 proteins have folate-dependent functions in iron-sulphur cluster metabolism.</title>
        <authorList>
            <person name="Waller J.C."/>
            <person name="Ellens K.W."/>
            <person name="Alvarez S."/>
            <person name="Loizeau K."/>
            <person name="Ravanel S."/>
            <person name="Hanson A.D."/>
        </authorList>
    </citation>
    <scope>FUNCTION</scope>
    <scope>SUBCELLULAR LOCATION</scope>
    <scope>TISSUE SPECIFICITY</scope>
</reference>
<proteinExistence type="evidence at protein level"/>
<dbReference type="EC" id="2.1.-.-" evidence="4"/>
<dbReference type="EMBL" id="AC018908">
    <property type="protein sequence ID" value="AAG51655.1"/>
    <property type="status" value="ALT_SEQ"/>
    <property type="molecule type" value="Genomic_DNA"/>
</dbReference>
<dbReference type="EMBL" id="CP002684">
    <property type="protein sequence ID" value="AEE33760.1"/>
    <property type="molecule type" value="Genomic_DNA"/>
</dbReference>
<dbReference type="EMBL" id="CP002684">
    <property type="protein sequence ID" value="AEE33761.1"/>
    <property type="molecule type" value="Genomic_DNA"/>
</dbReference>
<dbReference type="EMBL" id="CP002684">
    <property type="protein sequence ID" value="AEE33762.1"/>
    <property type="molecule type" value="Genomic_DNA"/>
</dbReference>
<dbReference type="EMBL" id="BT012559">
    <property type="protein sequence ID" value="AAS99703.1"/>
    <property type="molecule type" value="mRNA"/>
</dbReference>
<dbReference type="EMBL" id="AK175484">
    <property type="protein sequence ID" value="BAD43247.1"/>
    <property type="molecule type" value="mRNA"/>
</dbReference>
<dbReference type="PIR" id="E96635">
    <property type="entry name" value="E96635"/>
</dbReference>
<dbReference type="RefSeq" id="NP_001077748.1">
    <property type="nucleotide sequence ID" value="NM_001084279.1"/>
</dbReference>
<dbReference type="RefSeq" id="NP_001117522.1">
    <property type="nucleotide sequence ID" value="NM_001124050.2"/>
</dbReference>
<dbReference type="RefSeq" id="NP_176295.3">
    <property type="nucleotide sequence ID" value="NM_104780.4"/>
</dbReference>
<dbReference type="SMR" id="Q681Y3"/>
<dbReference type="FunCoup" id="Q681Y3">
    <property type="interactions" value="611"/>
</dbReference>
<dbReference type="STRING" id="3702.Q681Y3"/>
<dbReference type="GlyGen" id="Q681Y3">
    <property type="glycosylation" value="2 sites"/>
</dbReference>
<dbReference type="PaxDb" id="3702-AT1G60990.2"/>
<dbReference type="ProteomicsDB" id="242528"/>
<dbReference type="EnsemblPlants" id="AT1G60990.1">
    <property type="protein sequence ID" value="AT1G60990.1"/>
    <property type="gene ID" value="AT1G60990"/>
</dbReference>
<dbReference type="EnsemblPlants" id="AT1G60990.2">
    <property type="protein sequence ID" value="AT1G60990.2"/>
    <property type="gene ID" value="AT1G60990"/>
</dbReference>
<dbReference type="EnsemblPlants" id="AT1G60990.3">
    <property type="protein sequence ID" value="AT1G60990.3"/>
    <property type="gene ID" value="AT1G60990"/>
</dbReference>
<dbReference type="GeneID" id="842391"/>
<dbReference type="Gramene" id="AT1G60990.1">
    <property type="protein sequence ID" value="AT1G60990.1"/>
    <property type="gene ID" value="AT1G60990"/>
</dbReference>
<dbReference type="Gramene" id="AT1G60990.2">
    <property type="protein sequence ID" value="AT1G60990.2"/>
    <property type="gene ID" value="AT1G60990"/>
</dbReference>
<dbReference type="Gramene" id="AT1G60990.3">
    <property type="protein sequence ID" value="AT1G60990.3"/>
    <property type="gene ID" value="AT1G60990"/>
</dbReference>
<dbReference type="KEGG" id="ath:AT1G60990"/>
<dbReference type="Araport" id="AT1G60990"/>
<dbReference type="TAIR" id="AT1G60990">
    <property type="gene designation" value="IBA57.2"/>
</dbReference>
<dbReference type="eggNOG" id="KOG2770">
    <property type="taxonomic scope" value="Eukaryota"/>
</dbReference>
<dbReference type="HOGENOM" id="CLU_007884_6_3_1"/>
<dbReference type="InParanoid" id="Q681Y3"/>
<dbReference type="OMA" id="DHRTIPH"/>
<dbReference type="PhylomeDB" id="Q681Y3"/>
<dbReference type="PRO" id="PR:Q681Y3"/>
<dbReference type="Proteomes" id="UP000006548">
    <property type="component" value="Chromosome 1"/>
</dbReference>
<dbReference type="ExpressionAtlas" id="Q681Y3">
    <property type="expression patterns" value="baseline and differential"/>
</dbReference>
<dbReference type="GO" id="GO:0009507">
    <property type="term" value="C:chloroplast"/>
    <property type="evidence" value="ECO:0000314"/>
    <property type="project" value="TAIR"/>
</dbReference>
<dbReference type="GO" id="GO:0016740">
    <property type="term" value="F:transferase activity"/>
    <property type="evidence" value="ECO:0007669"/>
    <property type="project" value="UniProtKB-KW"/>
</dbReference>
<dbReference type="FunFam" id="3.30.1360.120:FF:000021">
    <property type="entry name" value="Slr0635 protein"/>
    <property type="match status" value="1"/>
</dbReference>
<dbReference type="Gene3D" id="3.30.1360.120">
    <property type="entry name" value="Probable tRNA modification gtpase trme, domain 1"/>
    <property type="match status" value="1"/>
</dbReference>
<dbReference type="InterPro" id="IPR013977">
    <property type="entry name" value="GCST_C"/>
</dbReference>
<dbReference type="InterPro" id="IPR006222">
    <property type="entry name" value="GCV_T_N"/>
</dbReference>
<dbReference type="InterPro" id="IPR028896">
    <property type="entry name" value="GcvT/YgfZ/DmdA"/>
</dbReference>
<dbReference type="InterPro" id="IPR029043">
    <property type="entry name" value="GcvT/YgfZ_C"/>
</dbReference>
<dbReference type="InterPro" id="IPR027266">
    <property type="entry name" value="TrmE/GcvT_dom1"/>
</dbReference>
<dbReference type="InterPro" id="IPR017703">
    <property type="entry name" value="YgfZ/GcvT_CS"/>
</dbReference>
<dbReference type="NCBIfam" id="TIGR03317">
    <property type="entry name" value="ygfZ_signature"/>
    <property type="match status" value="1"/>
</dbReference>
<dbReference type="PANTHER" id="PTHR43757">
    <property type="entry name" value="AMINOMETHYLTRANSFERASE"/>
    <property type="match status" value="1"/>
</dbReference>
<dbReference type="PANTHER" id="PTHR43757:SF14">
    <property type="entry name" value="GLYCINE CLEAVAGE T-PROTEIN FAMILY"/>
    <property type="match status" value="1"/>
</dbReference>
<dbReference type="Pfam" id="PF01571">
    <property type="entry name" value="GCV_T"/>
    <property type="match status" value="1"/>
</dbReference>
<dbReference type="Pfam" id="PF08669">
    <property type="entry name" value="GCV_T_C"/>
    <property type="match status" value="1"/>
</dbReference>
<dbReference type="SUPFAM" id="SSF101790">
    <property type="entry name" value="Aminomethyltransferase beta-barrel domain"/>
    <property type="match status" value="1"/>
</dbReference>
<dbReference type="SUPFAM" id="SSF103025">
    <property type="entry name" value="Folate-binding domain"/>
    <property type="match status" value="1"/>
</dbReference>
<comment type="function">
    <text evidence="2 3">Folate-dependent protein involved in Fe/S cluster biogenesis. Functionally complements an E.coli mutant defective in ygfZ.</text>
</comment>
<comment type="subcellular location">
    <subcellularLocation>
        <location evidence="3">Plastid</location>
        <location evidence="3">Chloroplast</location>
    </subcellularLocation>
</comment>
<comment type="tissue specificity">
    <text evidence="3">Expressed in young leaves (at protein level).</text>
</comment>
<comment type="similarity">
    <text evidence="4">Belongs to the GcvT family.</text>
</comment>
<comment type="sequence caution" evidence="4">
    <conflict type="erroneous gene model prediction">
        <sequence resource="EMBL-CDS" id="AAG51655"/>
    </conflict>
</comment>
<accession>Q681Y3</accession>
<accession>Q6NKY4</accession>
<accession>Q9C954</accession>
<evidence type="ECO:0000255" key="1"/>
<evidence type="ECO:0000269" key="2">
    <source>
    </source>
</evidence>
<evidence type="ECO:0000269" key="3">
    <source>
    </source>
</evidence>
<evidence type="ECO:0000305" key="4"/>
<evidence type="ECO:0000312" key="5">
    <source>
        <dbReference type="Araport" id="AT1G60990"/>
    </source>
</evidence>
<evidence type="ECO:0000312" key="6">
    <source>
        <dbReference type="EMBL" id="AAG51655.1"/>
    </source>
</evidence>
<sequence length="432" mass="47009">MNLLQSCKDMAMMMRIDSVSHITNTALLPCLYNGTVLRRRSLSLRKCGFRERKFQLRCVSASSDSLQFDFSPPPIDHDFLDTISVSGGKVSEDGVVESFDNDDEALDAFDNGVVVVDLSHFGRIRVSGDDRAHFLHNQTTANFESLYEGQGCDTVFVTPTARTIDIAHAWIMKNAILLTVSPTTCQSIIEMLNKYIFFADKVEIKDITKQTCLFALAGPKSNQIMSKLNLGDLIGQPYGRHQHYSFDGMPITVGVGSLISDEGFTMLMSPGGAVSVWKTLLAEGAIPMGSVAWEKLRITQGRPAPERELSKEFNVLEAGLWNSISLNKGCYKGQETIARLMTYDGIKQRLCGLNLSAPSEPGSTITVDGKKVGKLTSYTGGKNGSGHFGLGYIKKQAASIGNTVTVGEDISGIVSEVPYLARQHPPSANSSS</sequence>
<name>Y1099_ARATH</name>
<gene>
    <name evidence="5" type="ordered locus">At1g60990</name>
    <name evidence="6" type="ORF">T7P1.13</name>
</gene>
<protein>
    <recommendedName>
        <fullName evidence="4">Putative transferase At1g60990, chloroplastic</fullName>
        <ecNumber evidence="4">2.1.-.-</ecNumber>
    </recommendedName>
    <alternativeName>
        <fullName evidence="4">Iron-sulfur cluster assembly factor homolog COG0354</fullName>
    </alternativeName>
</protein>
<feature type="transit peptide" description="Chloroplast" evidence="1">
    <location>
        <begin position="1"/>
        <end position="57"/>
    </location>
</feature>
<feature type="chain" id="PRO_0000433438" description="Putative transferase At1g60990, chloroplastic" evidence="1">
    <location>
        <begin position="58"/>
        <end position="432"/>
    </location>
</feature>
<organism>
    <name type="scientific">Arabidopsis thaliana</name>
    <name type="common">Mouse-ear cress</name>
    <dbReference type="NCBI Taxonomy" id="3702"/>
    <lineage>
        <taxon>Eukaryota</taxon>
        <taxon>Viridiplantae</taxon>
        <taxon>Streptophyta</taxon>
        <taxon>Embryophyta</taxon>
        <taxon>Tracheophyta</taxon>
        <taxon>Spermatophyta</taxon>
        <taxon>Magnoliopsida</taxon>
        <taxon>eudicotyledons</taxon>
        <taxon>Gunneridae</taxon>
        <taxon>Pentapetalae</taxon>
        <taxon>rosids</taxon>
        <taxon>malvids</taxon>
        <taxon>Brassicales</taxon>
        <taxon>Brassicaceae</taxon>
        <taxon>Camelineae</taxon>
        <taxon>Arabidopsis</taxon>
    </lineage>
</organism>